<comment type="function">
    <text evidence="1">With S4 and S12 plays an important role in translational accuracy.</text>
</comment>
<comment type="function">
    <text evidence="1">Located at the back of the 30S subunit body where it stabilizes the conformation of the head with respect to the body.</text>
</comment>
<comment type="subunit">
    <text evidence="1">Part of the 30S ribosomal subunit. Contacts proteins S4 and S8.</text>
</comment>
<comment type="domain">
    <text>The N-terminal domain interacts with the head of the 30S subunit; the C-terminal domain interacts with the body and contacts protein S4. The interaction surface between S4 and S5 is involved in control of translational fidelity.</text>
</comment>
<comment type="similarity">
    <text evidence="1">Belongs to the universal ribosomal protein uS5 family.</text>
</comment>
<dbReference type="EMBL" id="CP000301">
    <property type="protein sequence ID" value="ABD88971.1"/>
    <property type="molecule type" value="Genomic_DNA"/>
</dbReference>
<dbReference type="SMR" id="Q211G5"/>
<dbReference type="STRING" id="316056.RPC_3431"/>
<dbReference type="KEGG" id="rpc:RPC_3431"/>
<dbReference type="eggNOG" id="COG0098">
    <property type="taxonomic scope" value="Bacteria"/>
</dbReference>
<dbReference type="HOGENOM" id="CLU_065898_2_2_5"/>
<dbReference type="OrthoDB" id="9809045at2"/>
<dbReference type="GO" id="GO:0015935">
    <property type="term" value="C:small ribosomal subunit"/>
    <property type="evidence" value="ECO:0007669"/>
    <property type="project" value="InterPro"/>
</dbReference>
<dbReference type="GO" id="GO:0019843">
    <property type="term" value="F:rRNA binding"/>
    <property type="evidence" value="ECO:0007669"/>
    <property type="project" value="UniProtKB-UniRule"/>
</dbReference>
<dbReference type="GO" id="GO:0003735">
    <property type="term" value="F:structural constituent of ribosome"/>
    <property type="evidence" value="ECO:0007669"/>
    <property type="project" value="InterPro"/>
</dbReference>
<dbReference type="GO" id="GO:0006412">
    <property type="term" value="P:translation"/>
    <property type="evidence" value="ECO:0007669"/>
    <property type="project" value="UniProtKB-UniRule"/>
</dbReference>
<dbReference type="FunFam" id="3.30.160.20:FF:000001">
    <property type="entry name" value="30S ribosomal protein S5"/>
    <property type="match status" value="1"/>
</dbReference>
<dbReference type="FunFam" id="3.30.230.10:FF:000002">
    <property type="entry name" value="30S ribosomal protein S5"/>
    <property type="match status" value="1"/>
</dbReference>
<dbReference type="Gene3D" id="3.30.160.20">
    <property type="match status" value="1"/>
</dbReference>
<dbReference type="Gene3D" id="3.30.230.10">
    <property type="match status" value="1"/>
</dbReference>
<dbReference type="HAMAP" id="MF_01307_B">
    <property type="entry name" value="Ribosomal_uS5_B"/>
    <property type="match status" value="1"/>
</dbReference>
<dbReference type="InterPro" id="IPR020568">
    <property type="entry name" value="Ribosomal_Su5_D2-typ_SF"/>
</dbReference>
<dbReference type="InterPro" id="IPR000851">
    <property type="entry name" value="Ribosomal_uS5"/>
</dbReference>
<dbReference type="InterPro" id="IPR005712">
    <property type="entry name" value="Ribosomal_uS5_bac-type"/>
</dbReference>
<dbReference type="InterPro" id="IPR005324">
    <property type="entry name" value="Ribosomal_uS5_C"/>
</dbReference>
<dbReference type="InterPro" id="IPR013810">
    <property type="entry name" value="Ribosomal_uS5_N"/>
</dbReference>
<dbReference type="InterPro" id="IPR018192">
    <property type="entry name" value="Ribosomal_uS5_N_CS"/>
</dbReference>
<dbReference type="InterPro" id="IPR014721">
    <property type="entry name" value="Ribsml_uS5_D2-typ_fold_subgr"/>
</dbReference>
<dbReference type="NCBIfam" id="TIGR01021">
    <property type="entry name" value="rpsE_bact"/>
    <property type="match status" value="1"/>
</dbReference>
<dbReference type="PANTHER" id="PTHR48277">
    <property type="entry name" value="MITOCHONDRIAL RIBOSOMAL PROTEIN S5"/>
    <property type="match status" value="1"/>
</dbReference>
<dbReference type="PANTHER" id="PTHR48277:SF1">
    <property type="entry name" value="MITOCHONDRIAL RIBOSOMAL PROTEIN S5"/>
    <property type="match status" value="1"/>
</dbReference>
<dbReference type="Pfam" id="PF00333">
    <property type="entry name" value="Ribosomal_S5"/>
    <property type="match status" value="1"/>
</dbReference>
<dbReference type="Pfam" id="PF03719">
    <property type="entry name" value="Ribosomal_S5_C"/>
    <property type="match status" value="1"/>
</dbReference>
<dbReference type="SUPFAM" id="SSF54768">
    <property type="entry name" value="dsRNA-binding domain-like"/>
    <property type="match status" value="1"/>
</dbReference>
<dbReference type="SUPFAM" id="SSF54211">
    <property type="entry name" value="Ribosomal protein S5 domain 2-like"/>
    <property type="match status" value="1"/>
</dbReference>
<dbReference type="PROSITE" id="PS00585">
    <property type="entry name" value="RIBOSOMAL_S5"/>
    <property type="match status" value="1"/>
</dbReference>
<dbReference type="PROSITE" id="PS50881">
    <property type="entry name" value="S5_DSRBD"/>
    <property type="match status" value="1"/>
</dbReference>
<reference key="1">
    <citation type="submission" date="2006-03" db="EMBL/GenBank/DDBJ databases">
        <title>Complete sequence of Rhodopseudomonas palustris BisB18.</title>
        <authorList>
            <consortium name="US DOE Joint Genome Institute"/>
            <person name="Copeland A."/>
            <person name="Lucas S."/>
            <person name="Lapidus A."/>
            <person name="Barry K."/>
            <person name="Detter J.C."/>
            <person name="Glavina del Rio T."/>
            <person name="Hammon N."/>
            <person name="Israni S."/>
            <person name="Dalin E."/>
            <person name="Tice H."/>
            <person name="Pitluck S."/>
            <person name="Chain P."/>
            <person name="Malfatti S."/>
            <person name="Shin M."/>
            <person name="Vergez L."/>
            <person name="Schmutz J."/>
            <person name="Larimer F."/>
            <person name="Land M."/>
            <person name="Hauser L."/>
            <person name="Pelletier D.A."/>
            <person name="Kyrpides N."/>
            <person name="Anderson I."/>
            <person name="Oda Y."/>
            <person name="Harwood C.S."/>
            <person name="Richardson P."/>
        </authorList>
    </citation>
    <scope>NUCLEOTIDE SEQUENCE [LARGE SCALE GENOMIC DNA]</scope>
    <source>
        <strain>BisB18</strain>
    </source>
</reference>
<name>RS5_RHOPB</name>
<protein>
    <recommendedName>
        <fullName evidence="1">Small ribosomal subunit protein uS5</fullName>
    </recommendedName>
    <alternativeName>
        <fullName evidence="2">30S ribosomal protein S5</fullName>
    </alternativeName>
</protein>
<sequence length="190" mass="20473">MAGERERGGGHRGPREERDSEFVDKLVHINRVAKVVKGGKRFGFAALVVIGDQKGRVGFGHGKAREVPEAIRKATESAKRNLTRVPLREGRTLHHDIAGRHGAGRVYLRAAPAGTGIIAGGPMRAVFETLGIQDVVAKSIGSSNPYNMVRATFDALKHQDSPRSVAARRNLKVSTLQSRRVGGDAEVVAE</sequence>
<organism>
    <name type="scientific">Rhodopseudomonas palustris (strain BisB18)</name>
    <dbReference type="NCBI Taxonomy" id="316056"/>
    <lineage>
        <taxon>Bacteria</taxon>
        <taxon>Pseudomonadati</taxon>
        <taxon>Pseudomonadota</taxon>
        <taxon>Alphaproteobacteria</taxon>
        <taxon>Hyphomicrobiales</taxon>
        <taxon>Nitrobacteraceae</taxon>
        <taxon>Rhodopseudomonas</taxon>
    </lineage>
</organism>
<gene>
    <name evidence="1" type="primary">rpsE</name>
    <name type="ordered locus">RPC_3431</name>
</gene>
<evidence type="ECO:0000255" key="1">
    <source>
        <dbReference type="HAMAP-Rule" id="MF_01307"/>
    </source>
</evidence>
<evidence type="ECO:0000305" key="2"/>
<proteinExistence type="inferred from homology"/>
<feature type="chain" id="PRO_0000323182" description="Small ribosomal subunit protein uS5">
    <location>
        <begin position="1"/>
        <end position="190"/>
    </location>
</feature>
<feature type="domain" description="S5 DRBM" evidence="1">
    <location>
        <begin position="22"/>
        <end position="85"/>
    </location>
</feature>
<keyword id="KW-0687">Ribonucleoprotein</keyword>
<keyword id="KW-0689">Ribosomal protein</keyword>
<keyword id="KW-0694">RNA-binding</keyword>
<keyword id="KW-0699">rRNA-binding</keyword>
<accession>Q211G5</accession>